<accession>P0DKM6</accession>
<dbReference type="GO" id="GO:0005576">
    <property type="term" value="C:extracellular region"/>
    <property type="evidence" value="ECO:0007669"/>
    <property type="project" value="UniProtKB-SubCell"/>
</dbReference>
<dbReference type="GO" id="GO:0099106">
    <property type="term" value="F:ion channel regulator activity"/>
    <property type="evidence" value="ECO:0007669"/>
    <property type="project" value="UniProtKB-KW"/>
</dbReference>
<dbReference type="GO" id="GO:0090729">
    <property type="term" value="F:toxin activity"/>
    <property type="evidence" value="ECO:0007669"/>
    <property type="project" value="UniProtKB-KW"/>
</dbReference>
<name>TU71_IOTOL</name>
<evidence type="ECO:0000250" key="1"/>
<reference key="1">
    <citation type="journal article" date="2006" name="J. Mol. Evol.">
        <title>Genes expressed in a turrid venom duct: divergence and similarity to conotoxins.</title>
        <authorList>
            <person name="Watkins M."/>
            <person name="Hillyard D.R."/>
            <person name="Olivera B.M."/>
        </authorList>
    </citation>
    <scope>NUCLEOTIDE SEQUENCE [MRNA]</scope>
    <source>
        <tissue>Venom duct</tissue>
    </source>
</reference>
<organism>
    <name type="scientific">Iotyrris olangoensis</name>
    <name type="common">Sea snail</name>
    <name type="synonym">Lophiotoma olangoensis</name>
    <dbReference type="NCBI Taxonomy" id="2420066"/>
    <lineage>
        <taxon>Eukaryota</taxon>
        <taxon>Metazoa</taxon>
        <taxon>Spiralia</taxon>
        <taxon>Lophotrochozoa</taxon>
        <taxon>Mollusca</taxon>
        <taxon>Gastropoda</taxon>
        <taxon>Caenogastropoda</taxon>
        <taxon>Neogastropoda</taxon>
        <taxon>Conoidea</taxon>
        <taxon>Turridae</taxon>
        <taxon>Iotyrris</taxon>
    </lineage>
</organism>
<proteinExistence type="evidence at transcript level"/>
<comment type="function">
    <text evidence="1">Acts as a neurotoxin by inhibiting an ion channel.</text>
</comment>
<comment type="subcellular location">
    <subcellularLocation>
        <location evidence="1">Secreted</location>
    </subcellularLocation>
</comment>
<comment type="tissue specificity">
    <text>Expressed by the venom duct.</text>
</comment>
<comment type="domain">
    <text>The cysteine framework is VIII (C-C-C-C-C-C-C-C-C-C).</text>
</comment>
<comment type="PTM">
    <text evidence="1">Contains 5 disulfide bonds.</text>
</comment>
<keyword id="KW-1015">Disulfide bond</keyword>
<keyword id="KW-0872">Ion channel impairing toxin</keyword>
<keyword id="KW-0528">Neurotoxin</keyword>
<keyword id="KW-0964">Secreted</keyword>
<keyword id="KW-0800">Toxin</keyword>
<sequence>ASCAARACALSGSNITVTYCSCTDGTTHVCPDGDSHETNDMYFCENISGVAACPDTNTVAVEVIYRDDSTNPIEGFQLHCRCSTYESSGLHYVCEELIG</sequence>
<feature type="chain" id="PRO_0000419840" description="Turripeptide OL71">
    <location>
        <begin position="1"/>
        <end position="99"/>
    </location>
</feature>
<protein>
    <recommendedName>
        <fullName>Turripeptide OL71</fullName>
    </recommendedName>
</protein>